<keyword id="KW-0027">Amidation</keyword>
<keyword id="KW-0903">Direct protein sequencing</keyword>
<keyword id="KW-1015">Disulfide bond</keyword>
<keyword id="KW-0872">Ion channel impairing toxin</keyword>
<keyword id="KW-0528">Neurotoxin</keyword>
<keyword id="KW-0964">Secreted</keyword>
<keyword id="KW-0732">Signal</keyword>
<keyword id="KW-0800">Toxin</keyword>
<keyword id="KW-0738">Voltage-gated sodium channel impairing toxin</keyword>
<protein>
    <recommendedName>
        <fullName>Alpha-toxin To2</fullName>
    </recommendedName>
    <alternativeName>
        <fullName>Alpha-toxin Tc48a</fullName>
    </alternativeName>
    <alternativeName>
        <fullName>Alpha-toxin To48a</fullName>
    </alternativeName>
    <alternativeName>
        <fullName>PT-alpha' NaTx11.1</fullName>
    </alternativeName>
</protein>
<dbReference type="EMBL" id="HE585225">
    <property type="protein sequence ID" value="CCD31419.1"/>
    <property type="molecule type" value="mRNA"/>
</dbReference>
<dbReference type="SMR" id="P60212"/>
<dbReference type="GO" id="GO:0005576">
    <property type="term" value="C:extracellular region"/>
    <property type="evidence" value="ECO:0007005"/>
    <property type="project" value="UniProtKB"/>
</dbReference>
<dbReference type="GO" id="GO:0019871">
    <property type="term" value="F:sodium channel inhibitor activity"/>
    <property type="evidence" value="ECO:0007669"/>
    <property type="project" value="InterPro"/>
</dbReference>
<dbReference type="GO" id="GO:0017080">
    <property type="term" value="F:sodium channel regulator activity"/>
    <property type="evidence" value="ECO:0000314"/>
    <property type="project" value="UniProtKB"/>
</dbReference>
<dbReference type="GO" id="GO:0090729">
    <property type="term" value="F:toxin activity"/>
    <property type="evidence" value="ECO:0000314"/>
    <property type="project" value="UniProtKB"/>
</dbReference>
<dbReference type="GO" id="GO:0006952">
    <property type="term" value="P:defense response"/>
    <property type="evidence" value="ECO:0007669"/>
    <property type="project" value="InterPro"/>
</dbReference>
<dbReference type="GO" id="GO:0044493">
    <property type="term" value="P:envenomation resulting in negative regulation of voltage-gated sodium channel activity in another organism"/>
    <property type="evidence" value="ECO:0000314"/>
    <property type="project" value="UniProtKB"/>
</dbReference>
<dbReference type="CDD" id="cd23106">
    <property type="entry name" value="neurotoxins_LC_scorpion"/>
    <property type="match status" value="1"/>
</dbReference>
<dbReference type="FunFam" id="3.30.30.10:FF:000002">
    <property type="entry name" value="Alpha-like toxin BmK-M1"/>
    <property type="match status" value="1"/>
</dbReference>
<dbReference type="Gene3D" id="3.30.30.10">
    <property type="entry name" value="Knottin, scorpion toxin-like"/>
    <property type="match status" value="1"/>
</dbReference>
<dbReference type="InterPro" id="IPR044062">
    <property type="entry name" value="LCN-type_CS_alpha_beta_dom"/>
</dbReference>
<dbReference type="InterPro" id="IPR003614">
    <property type="entry name" value="Scorpion_toxin-like"/>
</dbReference>
<dbReference type="InterPro" id="IPR036574">
    <property type="entry name" value="Scorpion_toxin-like_sf"/>
</dbReference>
<dbReference type="InterPro" id="IPR018218">
    <property type="entry name" value="Scorpion_toxinL"/>
</dbReference>
<dbReference type="InterPro" id="IPR002061">
    <property type="entry name" value="Scorpion_toxinL/defensin"/>
</dbReference>
<dbReference type="Pfam" id="PF00537">
    <property type="entry name" value="Toxin_3"/>
    <property type="match status" value="1"/>
</dbReference>
<dbReference type="PRINTS" id="PR00285">
    <property type="entry name" value="SCORPNTOXIN"/>
</dbReference>
<dbReference type="SMART" id="SM00505">
    <property type="entry name" value="Knot1"/>
    <property type="match status" value="1"/>
</dbReference>
<dbReference type="SUPFAM" id="SSF57095">
    <property type="entry name" value="Scorpion toxin-like"/>
    <property type="match status" value="1"/>
</dbReference>
<dbReference type="PROSITE" id="PS51863">
    <property type="entry name" value="LCN_CSAB"/>
    <property type="match status" value="1"/>
</dbReference>
<comment type="function">
    <text evidence="3">Alpha toxins bind voltage-independently at site-3 of sodium channels (Nav) and inhibit the inactivation of the activated channels, thereby blocking neuronal transmission. Affects the tetrodotoxin-sensitive sodium current permeability of F-11 rat neuroblastoma cells. Produces a dose dependent increase in amplitude and duration of the current.</text>
</comment>
<comment type="subcellular location">
    <subcellularLocation>
        <location evidence="2 3">Secreted</location>
    </subcellularLocation>
</comment>
<comment type="tissue specificity">
    <text evidence="5 6">Expressed by the venom gland.</text>
</comment>
<comment type="domain">
    <text evidence="4">Has the structural arrangement of an alpha-helix connected to antiparallel beta-sheets by disulfide bonds (CS-alpha/beta).</text>
</comment>
<comment type="mass spectrometry"/>
<comment type="mass spectrometry"/>
<comment type="similarity">
    <text evidence="4">Belongs to the long (4 C-C) scorpion toxin superfamily. Sodium channel inhibitor family.</text>
</comment>
<evidence type="ECO:0000255" key="1">
    <source>
        <dbReference type="PROSITE-ProRule" id="PRU01210"/>
    </source>
</evidence>
<evidence type="ECO:0000269" key="2">
    <source>
    </source>
</evidence>
<evidence type="ECO:0000269" key="3">
    <source>
    </source>
</evidence>
<evidence type="ECO:0000305" key="4"/>
<evidence type="ECO:0000305" key="5">
    <source>
    </source>
</evidence>
<evidence type="ECO:0000305" key="6">
    <source>
    </source>
</evidence>
<sequence>MIRFVLFISCFFLIGTVVECNKDGYLMEGDGCKMGCLTRKASYCVDQCKEVGGKDGYCYAWLSCYCYNMPDSVEIWDSKNNKCGKGK</sequence>
<accession>P60212</accession>
<accession>H1ZZH1</accession>
<name>SCX2_TITOB</name>
<reference key="1">
    <citation type="journal article" date="2012" name="PLoS ONE">
        <title>Identification and phylogenetic analysis of Tityus pachyurus and Tityus obscurus novel putative Na+-channel scorpion toxins.</title>
        <authorList>
            <person name="Guerrero-Vargas J.A."/>
            <person name="Mourao C.B."/>
            <person name="Quintero-Hernandez V."/>
            <person name="Possani L.D."/>
            <person name="Schwartz E.F."/>
        </authorList>
    </citation>
    <scope>NUCLEOTIDE SEQUENCE [MRNA]</scope>
    <scope>NOMENCLATURE</scope>
    <source>
        <tissue>Venom gland</tissue>
    </source>
</reference>
<reference key="2">
    <citation type="journal article" date="2004" name="J. Chromatogr. B">
        <title>Proteomics of the venom from the Amazonian scorpion Tityus cambridgei and the role of prolines on mass spectrometry analysis of toxins.</title>
        <authorList>
            <person name="Batista C.V.F."/>
            <person name="del Pozo L."/>
            <person name="Zamudio F.Z."/>
            <person name="Contreras S."/>
            <person name="Becerril B."/>
            <person name="Wanke E."/>
            <person name="Possani L.D."/>
        </authorList>
    </citation>
    <scope>PROTEIN SEQUENCE OF 21-85</scope>
    <scope>FUNCTION</scope>
    <scope>AMIDATION AT LYS-85</scope>
    <scope>MASS SPECTROMETRY</scope>
    <scope>SUBCELLULAR LOCATION</scope>
    <source>
        <tissue>Venom</tissue>
    </source>
</reference>
<reference key="3">
    <citation type="journal article" date="2002" name="Toxicon">
        <title>Scorpion toxins from Tityus cambridgei that affect Na(+)-channels.</title>
        <authorList>
            <person name="Batista C.V.F."/>
            <person name="Zamudio F.Z."/>
            <person name="Lucas S."/>
            <person name="Fox J.W."/>
            <person name="Frau A."/>
            <person name="Prestipino G."/>
            <person name="Possani L.D."/>
        </authorList>
    </citation>
    <scope>PROTEIN SEQUENCE OF 21-57</scope>
    <scope>MASS SPECTROMETRY</scope>
    <scope>SUBCELLULAR LOCATION</scope>
    <source>
        <tissue>Venom</tissue>
    </source>
</reference>
<organism>
    <name type="scientific">Tityus obscurus</name>
    <name type="common">Amazonian scorpion</name>
    <name type="synonym">Tityus cambridgei</name>
    <dbReference type="NCBI Taxonomy" id="1221240"/>
    <lineage>
        <taxon>Eukaryota</taxon>
        <taxon>Metazoa</taxon>
        <taxon>Ecdysozoa</taxon>
        <taxon>Arthropoda</taxon>
        <taxon>Chelicerata</taxon>
        <taxon>Arachnida</taxon>
        <taxon>Scorpiones</taxon>
        <taxon>Buthida</taxon>
        <taxon>Buthoidea</taxon>
        <taxon>Buthidae</taxon>
        <taxon>Tityus</taxon>
    </lineage>
</organism>
<feature type="signal peptide" evidence="2 3">
    <location>
        <begin position="1"/>
        <end position="20"/>
    </location>
</feature>
<feature type="chain" id="PRO_0000066809" description="Alpha-toxin To2">
    <location>
        <begin position="21"/>
        <end position="85"/>
    </location>
</feature>
<feature type="domain" description="LCN-type CS-alpha/beta" evidence="1">
    <location>
        <begin position="22"/>
        <end position="84"/>
    </location>
</feature>
<feature type="modified residue" description="Lysine amide" evidence="3">
    <location>
        <position position="85"/>
    </location>
</feature>
<feature type="disulfide bond" evidence="1">
    <location>
        <begin position="32"/>
        <end position="83"/>
    </location>
</feature>
<feature type="disulfide bond" evidence="1">
    <location>
        <begin position="36"/>
        <end position="58"/>
    </location>
</feature>
<feature type="disulfide bond" evidence="1">
    <location>
        <begin position="44"/>
        <end position="64"/>
    </location>
</feature>
<feature type="disulfide bond" evidence="1">
    <location>
        <begin position="48"/>
        <end position="66"/>
    </location>
</feature>
<feature type="sequence conflict" description="In Ref. 3; AA sequence." evidence="4" ref="3">
    <original>N</original>
    <variation>D</variation>
    <location>
        <position position="21"/>
    </location>
</feature>
<feature type="sequence conflict" description="In Ref. 3; AA sequence." evidence="4" ref="3">
    <original>KM</original>
    <variation>MN</variation>
    <location>
        <begin position="33"/>
        <end position="34"/>
    </location>
</feature>
<feature type="sequence conflict" description="In Ref. 3; AA sequence." evidence="4" ref="3">
    <original>D</original>
    <variation>N</variation>
    <location>
        <position position="55"/>
    </location>
</feature>
<proteinExistence type="evidence at protein level"/>